<name>HIS7_LEPBP</name>
<proteinExistence type="inferred from homology"/>
<keyword id="KW-0028">Amino-acid biosynthesis</keyword>
<keyword id="KW-0963">Cytoplasm</keyword>
<keyword id="KW-0368">Histidine biosynthesis</keyword>
<keyword id="KW-0456">Lyase</keyword>
<keyword id="KW-1185">Reference proteome</keyword>
<reference key="1">
    <citation type="journal article" date="2008" name="PLoS ONE">
        <title>Genome sequence of the saprophyte Leptospira biflexa provides insights into the evolution of Leptospira and the pathogenesis of leptospirosis.</title>
        <authorList>
            <person name="Picardeau M."/>
            <person name="Bulach D.M."/>
            <person name="Bouchier C."/>
            <person name="Zuerner R.L."/>
            <person name="Zidane N."/>
            <person name="Wilson P.J."/>
            <person name="Creno S."/>
            <person name="Kuczek E.S."/>
            <person name="Bommezzadri S."/>
            <person name="Davis J.C."/>
            <person name="McGrath A."/>
            <person name="Johnson M.J."/>
            <person name="Boursaux-Eude C."/>
            <person name="Seemann T."/>
            <person name="Rouy Z."/>
            <person name="Coppel R.L."/>
            <person name="Rood J.I."/>
            <person name="Lajus A."/>
            <person name="Davies J.K."/>
            <person name="Medigue C."/>
            <person name="Adler B."/>
        </authorList>
    </citation>
    <scope>NUCLEOTIDE SEQUENCE [LARGE SCALE GENOMIC DNA]</scope>
    <source>
        <strain>Patoc 1 / ATCC 23582 / Paris</strain>
    </source>
</reference>
<sequence>MLRNMVESRKTSETDIRLDLNLRGSGVYAFDTEIPFFEHMLSHIAKHGLIDMDLKLRGDIGIDCHHSVEDTAILLGQMIHTQLGDKKGIFRYGNFTLPMDEVLTTVAVDLGGRFYFKYTGPALDGKFGIYDAELTLEFLQKLALNAKMNLHVVVHYGENRHHIHESIFKALGKALRQAIAIDTSAKDQIPSTKGMLE</sequence>
<organism>
    <name type="scientific">Leptospira biflexa serovar Patoc (strain Patoc 1 / ATCC 23582 / Paris)</name>
    <dbReference type="NCBI Taxonomy" id="456481"/>
    <lineage>
        <taxon>Bacteria</taxon>
        <taxon>Pseudomonadati</taxon>
        <taxon>Spirochaetota</taxon>
        <taxon>Spirochaetia</taxon>
        <taxon>Leptospirales</taxon>
        <taxon>Leptospiraceae</taxon>
        <taxon>Leptospira</taxon>
    </lineage>
</organism>
<evidence type="ECO:0000255" key="1">
    <source>
        <dbReference type="HAMAP-Rule" id="MF_00076"/>
    </source>
</evidence>
<accession>B0SLU7</accession>
<gene>
    <name evidence="1" type="primary">hisB</name>
    <name type="ordered locus">LEPBI_I0874</name>
</gene>
<comment type="catalytic activity">
    <reaction evidence="1">
        <text>D-erythro-1-(imidazol-4-yl)glycerol 3-phosphate = 3-(imidazol-4-yl)-2-oxopropyl phosphate + H2O</text>
        <dbReference type="Rhea" id="RHEA:11040"/>
        <dbReference type="ChEBI" id="CHEBI:15377"/>
        <dbReference type="ChEBI" id="CHEBI:57766"/>
        <dbReference type="ChEBI" id="CHEBI:58278"/>
        <dbReference type="EC" id="4.2.1.19"/>
    </reaction>
</comment>
<comment type="pathway">
    <text evidence="1">Amino-acid biosynthesis; L-histidine biosynthesis; L-histidine from 5-phospho-alpha-D-ribose 1-diphosphate: step 6/9.</text>
</comment>
<comment type="subcellular location">
    <subcellularLocation>
        <location evidence="1">Cytoplasm</location>
    </subcellularLocation>
</comment>
<comment type="similarity">
    <text evidence="1">Belongs to the imidazoleglycerol-phosphate dehydratase family.</text>
</comment>
<feature type="chain" id="PRO_1000092698" description="Imidazoleglycerol-phosphate dehydratase">
    <location>
        <begin position="1"/>
        <end position="197"/>
    </location>
</feature>
<dbReference type="EC" id="4.2.1.19" evidence="1"/>
<dbReference type="EMBL" id="CP000786">
    <property type="protein sequence ID" value="ABZ96999.1"/>
    <property type="molecule type" value="Genomic_DNA"/>
</dbReference>
<dbReference type="SMR" id="B0SLU7"/>
<dbReference type="STRING" id="456481.LEPBI_I0874"/>
<dbReference type="KEGG" id="lbi:LEPBI_I0874"/>
<dbReference type="HOGENOM" id="CLU_044308_3_0_12"/>
<dbReference type="OrthoDB" id="9790411at2"/>
<dbReference type="UniPathway" id="UPA00031">
    <property type="reaction ID" value="UER00011"/>
</dbReference>
<dbReference type="Proteomes" id="UP000001847">
    <property type="component" value="Chromosome I"/>
</dbReference>
<dbReference type="GO" id="GO:0005737">
    <property type="term" value="C:cytoplasm"/>
    <property type="evidence" value="ECO:0007669"/>
    <property type="project" value="UniProtKB-SubCell"/>
</dbReference>
<dbReference type="GO" id="GO:0004424">
    <property type="term" value="F:imidazoleglycerol-phosphate dehydratase activity"/>
    <property type="evidence" value="ECO:0007669"/>
    <property type="project" value="UniProtKB-UniRule"/>
</dbReference>
<dbReference type="GO" id="GO:0000105">
    <property type="term" value="P:L-histidine biosynthetic process"/>
    <property type="evidence" value="ECO:0007669"/>
    <property type="project" value="UniProtKB-UniRule"/>
</dbReference>
<dbReference type="CDD" id="cd07914">
    <property type="entry name" value="IGPD"/>
    <property type="match status" value="1"/>
</dbReference>
<dbReference type="FunFam" id="3.30.230.40:FF:000001">
    <property type="entry name" value="Imidazoleglycerol-phosphate dehydratase HisB"/>
    <property type="match status" value="1"/>
</dbReference>
<dbReference type="FunFam" id="3.30.230.40:FF:000003">
    <property type="entry name" value="Imidazoleglycerol-phosphate dehydratase HisB"/>
    <property type="match status" value="1"/>
</dbReference>
<dbReference type="Gene3D" id="3.30.230.40">
    <property type="entry name" value="Imidazole glycerol phosphate dehydratase, domain 1"/>
    <property type="match status" value="2"/>
</dbReference>
<dbReference type="HAMAP" id="MF_00076">
    <property type="entry name" value="HisB"/>
    <property type="match status" value="1"/>
</dbReference>
<dbReference type="InterPro" id="IPR038494">
    <property type="entry name" value="IGPD_sf"/>
</dbReference>
<dbReference type="InterPro" id="IPR000807">
    <property type="entry name" value="ImidazoleglycerolP_deHydtase"/>
</dbReference>
<dbReference type="InterPro" id="IPR020565">
    <property type="entry name" value="ImidazoleglycerP_deHydtase_CS"/>
</dbReference>
<dbReference type="InterPro" id="IPR020568">
    <property type="entry name" value="Ribosomal_Su5_D2-typ_SF"/>
</dbReference>
<dbReference type="NCBIfam" id="NF002114">
    <property type="entry name" value="PRK00951.2-4"/>
    <property type="match status" value="1"/>
</dbReference>
<dbReference type="PANTHER" id="PTHR23133:SF2">
    <property type="entry name" value="IMIDAZOLEGLYCEROL-PHOSPHATE DEHYDRATASE"/>
    <property type="match status" value="1"/>
</dbReference>
<dbReference type="PANTHER" id="PTHR23133">
    <property type="entry name" value="IMIDAZOLEGLYCEROL-PHOSPHATE DEHYDRATASE HIS7"/>
    <property type="match status" value="1"/>
</dbReference>
<dbReference type="Pfam" id="PF00475">
    <property type="entry name" value="IGPD"/>
    <property type="match status" value="1"/>
</dbReference>
<dbReference type="SUPFAM" id="SSF54211">
    <property type="entry name" value="Ribosomal protein S5 domain 2-like"/>
    <property type="match status" value="2"/>
</dbReference>
<dbReference type="PROSITE" id="PS00954">
    <property type="entry name" value="IGP_DEHYDRATASE_1"/>
    <property type="match status" value="1"/>
</dbReference>
<dbReference type="PROSITE" id="PS00955">
    <property type="entry name" value="IGP_DEHYDRATASE_2"/>
    <property type="match status" value="1"/>
</dbReference>
<protein>
    <recommendedName>
        <fullName evidence="1">Imidazoleglycerol-phosphate dehydratase</fullName>
        <shortName evidence="1">IGPD</shortName>
        <ecNumber evidence="1">4.2.1.19</ecNumber>
    </recommendedName>
</protein>